<proteinExistence type="inferred from homology"/>
<feature type="chain" id="PRO_0000145966" description="Phosphoglycerate kinase">
    <location>
        <begin position="1"/>
        <end position="404"/>
    </location>
</feature>
<feature type="binding site" evidence="1">
    <location>
        <begin position="26"/>
        <end position="28"/>
    </location>
    <ligand>
        <name>substrate</name>
    </ligand>
</feature>
<feature type="binding site" evidence="1">
    <location>
        <position position="41"/>
    </location>
    <ligand>
        <name>substrate</name>
    </ligand>
</feature>
<feature type="binding site" evidence="1">
    <location>
        <begin position="64"/>
        <end position="67"/>
    </location>
    <ligand>
        <name>substrate</name>
    </ligand>
</feature>
<feature type="binding site" evidence="1">
    <location>
        <position position="124"/>
    </location>
    <ligand>
        <name>substrate</name>
    </ligand>
</feature>
<feature type="binding site" evidence="1">
    <location>
        <position position="161"/>
    </location>
    <ligand>
        <name>substrate</name>
    </ligand>
</feature>
<feature type="binding site" evidence="1">
    <location>
        <position position="212"/>
    </location>
    <ligand>
        <name>ATP</name>
        <dbReference type="ChEBI" id="CHEBI:30616"/>
    </ligand>
</feature>
<feature type="binding site" evidence="1">
    <location>
        <position position="301"/>
    </location>
    <ligand>
        <name>ATP</name>
        <dbReference type="ChEBI" id="CHEBI:30616"/>
    </ligand>
</feature>
<feature type="binding site" evidence="1">
    <location>
        <position position="332"/>
    </location>
    <ligand>
        <name>ATP</name>
        <dbReference type="ChEBI" id="CHEBI:30616"/>
    </ligand>
</feature>
<feature type="binding site" evidence="1">
    <location>
        <begin position="359"/>
        <end position="362"/>
    </location>
    <ligand>
        <name>ATP</name>
        <dbReference type="ChEBI" id="CHEBI:30616"/>
    </ligand>
</feature>
<evidence type="ECO:0000255" key="1">
    <source>
        <dbReference type="HAMAP-Rule" id="MF_00145"/>
    </source>
</evidence>
<accession>Q7WZ28</accession>
<accession>Q600G7</accession>
<reference key="1">
    <citation type="submission" date="2003-06" db="EMBL/GenBank/DDBJ databases">
        <title>Genome sequence of Mycoplasma hyopneumoniae.</title>
        <authorList>
            <person name="Minion F.C."/>
            <person name="Wallace J."/>
            <person name="Lefkowitz E.J."/>
            <person name="Madsen M.L."/>
            <person name="Swartzell S."/>
            <person name="Cleary B.J."/>
            <person name="Mahairas G.G."/>
        </authorList>
    </citation>
    <scope>NUCLEOTIDE SEQUENCE [GENOMIC DNA]</scope>
</reference>
<reference key="2">
    <citation type="journal article" date="2004" name="J. Bacteriol.">
        <title>The genome sequence of Mycoplasma hyopneumoniae strain 232, the agent of swine mycoplasmosis.</title>
        <authorList>
            <person name="Minion F.C."/>
            <person name="Lefkowitz E.J."/>
            <person name="Madsen M.L."/>
            <person name="Cleary B.J."/>
            <person name="Swartzell S.M."/>
            <person name="Mahairas G.G."/>
        </authorList>
    </citation>
    <scope>NUCLEOTIDE SEQUENCE [LARGE SCALE GENOMIC DNA]</scope>
    <source>
        <strain>232</strain>
    </source>
</reference>
<sequence>MQPTYKNKKFIDDIDFLNKTVILRVDFNVPIKNGEISSIKRIIASLKTIKKIVNNGGKLVILSHLGRIKSKEDLPKKSLRIVAEKLAEILGQEIKFIPENRGPKVENAISQLEKGEILVLENTRFQDLNNKAESKNDAELGRYWASLGDVFINDAFGTLHRAHGSNVGIATYIKESAIGYLVKEELDALSKLIFSPQRPFYAIIGGAKISDKIGIISTLLEKADKVLIGGGMAYTFKKALGYKIGLSIYEDDKLELAASLVKKYPDKLILALDAALAPEFADLEPLYNQENPLEIPDHLEGMDIGPLTIELFKDHLKDGKTILWNGTLGVAEFKNFARGTKEVAKIIANLKECYSIIGGGDSIAAIEAEGLSNSFSHISTGGGASISFIENGDLIGLGPIQEKD</sequence>
<dbReference type="EC" id="2.7.2.3" evidence="1"/>
<dbReference type="EMBL" id="AY319328">
    <property type="protein sequence ID" value="AAP82943.1"/>
    <property type="molecule type" value="Genomic_DNA"/>
</dbReference>
<dbReference type="EMBL" id="AE017332">
    <property type="protein sequence ID" value="AAV27590.1"/>
    <property type="molecule type" value="Genomic_DNA"/>
</dbReference>
<dbReference type="RefSeq" id="WP_011206322.1">
    <property type="nucleotide sequence ID" value="NC_006360.1"/>
</dbReference>
<dbReference type="SMR" id="Q7WZ28"/>
<dbReference type="KEGG" id="mhy:mhp488"/>
<dbReference type="eggNOG" id="COG0126">
    <property type="taxonomic scope" value="Bacteria"/>
</dbReference>
<dbReference type="HOGENOM" id="CLU_025427_0_2_14"/>
<dbReference type="PhylomeDB" id="Q7WZ28"/>
<dbReference type="UniPathway" id="UPA00109">
    <property type="reaction ID" value="UER00185"/>
</dbReference>
<dbReference type="Proteomes" id="UP000006822">
    <property type="component" value="Chromosome"/>
</dbReference>
<dbReference type="GO" id="GO:0005829">
    <property type="term" value="C:cytosol"/>
    <property type="evidence" value="ECO:0007669"/>
    <property type="project" value="TreeGrafter"/>
</dbReference>
<dbReference type="GO" id="GO:0043531">
    <property type="term" value="F:ADP binding"/>
    <property type="evidence" value="ECO:0007669"/>
    <property type="project" value="TreeGrafter"/>
</dbReference>
<dbReference type="GO" id="GO:0005524">
    <property type="term" value="F:ATP binding"/>
    <property type="evidence" value="ECO:0007669"/>
    <property type="project" value="UniProtKB-KW"/>
</dbReference>
<dbReference type="GO" id="GO:0004618">
    <property type="term" value="F:phosphoglycerate kinase activity"/>
    <property type="evidence" value="ECO:0007669"/>
    <property type="project" value="UniProtKB-UniRule"/>
</dbReference>
<dbReference type="GO" id="GO:0006094">
    <property type="term" value="P:gluconeogenesis"/>
    <property type="evidence" value="ECO:0007669"/>
    <property type="project" value="TreeGrafter"/>
</dbReference>
<dbReference type="GO" id="GO:0006096">
    <property type="term" value="P:glycolytic process"/>
    <property type="evidence" value="ECO:0007669"/>
    <property type="project" value="UniProtKB-UniRule"/>
</dbReference>
<dbReference type="FunFam" id="3.40.50.1260:FF:000006">
    <property type="entry name" value="Phosphoglycerate kinase"/>
    <property type="match status" value="1"/>
</dbReference>
<dbReference type="FunFam" id="3.40.50.1260:FF:000031">
    <property type="entry name" value="Phosphoglycerate kinase 1"/>
    <property type="match status" value="1"/>
</dbReference>
<dbReference type="Gene3D" id="3.40.50.1260">
    <property type="entry name" value="Phosphoglycerate kinase, N-terminal domain"/>
    <property type="match status" value="2"/>
</dbReference>
<dbReference type="HAMAP" id="MF_00145">
    <property type="entry name" value="Phosphoglyc_kinase"/>
    <property type="match status" value="1"/>
</dbReference>
<dbReference type="InterPro" id="IPR001576">
    <property type="entry name" value="Phosphoglycerate_kinase"/>
</dbReference>
<dbReference type="InterPro" id="IPR015911">
    <property type="entry name" value="Phosphoglycerate_kinase_CS"/>
</dbReference>
<dbReference type="InterPro" id="IPR015824">
    <property type="entry name" value="Phosphoglycerate_kinase_N"/>
</dbReference>
<dbReference type="InterPro" id="IPR036043">
    <property type="entry name" value="Phosphoglycerate_kinase_sf"/>
</dbReference>
<dbReference type="PANTHER" id="PTHR11406">
    <property type="entry name" value="PHOSPHOGLYCERATE KINASE"/>
    <property type="match status" value="1"/>
</dbReference>
<dbReference type="PANTHER" id="PTHR11406:SF23">
    <property type="entry name" value="PHOSPHOGLYCERATE KINASE 1, CHLOROPLASTIC-RELATED"/>
    <property type="match status" value="1"/>
</dbReference>
<dbReference type="Pfam" id="PF00162">
    <property type="entry name" value="PGK"/>
    <property type="match status" value="1"/>
</dbReference>
<dbReference type="PIRSF" id="PIRSF000724">
    <property type="entry name" value="Pgk"/>
    <property type="match status" value="1"/>
</dbReference>
<dbReference type="PRINTS" id="PR00477">
    <property type="entry name" value="PHGLYCKINASE"/>
</dbReference>
<dbReference type="SUPFAM" id="SSF53748">
    <property type="entry name" value="Phosphoglycerate kinase"/>
    <property type="match status" value="1"/>
</dbReference>
<dbReference type="PROSITE" id="PS00111">
    <property type="entry name" value="PGLYCERATE_KINASE"/>
    <property type="match status" value="1"/>
</dbReference>
<keyword id="KW-0067">ATP-binding</keyword>
<keyword id="KW-0963">Cytoplasm</keyword>
<keyword id="KW-0324">Glycolysis</keyword>
<keyword id="KW-0418">Kinase</keyword>
<keyword id="KW-0547">Nucleotide-binding</keyword>
<keyword id="KW-0808">Transferase</keyword>
<name>PGK_MESH2</name>
<protein>
    <recommendedName>
        <fullName evidence="1">Phosphoglycerate kinase</fullName>
        <ecNumber evidence="1">2.7.2.3</ecNumber>
    </recommendedName>
</protein>
<organism>
    <name type="scientific">Mesomycoplasma hyopneumoniae (strain 232)</name>
    <name type="common">Mycoplasma hyopneumoniae</name>
    <dbReference type="NCBI Taxonomy" id="295358"/>
    <lineage>
        <taxon>Bacteria</taxon>
        <taxon>Bacillati</taxon>
        <taxon>Mycoplasmatota</taxon>
        <taxon>Mycoplasmoidales</taxon>
        <taxon>Metamycoplasmataceae</taxon>
        <taxon>Mesomycoplasma</taxon>
    </lineage>
</organism>
<comment type="catalytic activity">
    <reaction evidence="1">
        <text>(2R)-3-phosphoglycerate + ATP = (2R)-3-phospho-glyceroyl phosphate + ADP</text>
        <dbReference type="Rhea" id="RHEA:14801"/>
        <dbReference type="ChEBI" id="CHEBI:30616"/>
        <dbReference type="ChEBI" id="CHEBI:57604"/>
        <dbReference type="ChEBI" id="CHEBI:58272"/>
        <dbReference type="ChEBI" id="CHEBI:456216"/>
        <dbReference type="EC" id="2.7.2.3"/>
    </reaction>
</comment>
<comment type="pathway">
    <text evidence="1">Carbohydrate degradation; glycolysis; pyruvate from D-glyceraldehyde 3-phosphate: step 2/5.</text>
</comment>
<comment type="subunit">
    <text evidence="1">Monomer.</text>
</comment>
<comment type="subcellular location">
    <subcellularLocation>
        <location evidence="1">Cytoplasm</location>
    </subcellularLocation>
</comment>
<comment type="similarity">
    <text evidence="1">Belongs to the phosphoglycerate kinase family.</text>
</comment>
<gene>
    <name evidence="1" type="primary">pgk</name>
    <name type="ordered locus">mhp488</name>
</gene>